<keyword id="KW-0002">3D-structure</keyword>
<keyword id="KW-0079">Bacteriocin immunity</keyword>
<keyword id="KW-1015">Disulfide bond</keyword>
<keyword id="KW-0614">Plasmid</keyword>
<name>IMMM_ECOLX</name>
<sequence>MLTLYGYIRNVFLYRMNDRSCGDFMKVISMKFIFILTIIALAAVFFWSEDKGPACYQVSDEQARTFVKNDYLQRMKRWDNDVQLLGTEIPKITWEKIERSLTDVEDEKTLLVPFKAEGPDGKRMYYGMYHCEEGYVEYAND</sequence>
<gene>
    <name type="primary">cmi</name>
</gene>
<dbReference type="EMBL" id="M35683">
    <property type="protein sequence ID" value="AAA23011.1"/>
    <property type="molecule type" value="Genomic_DNA"/>
</dbReference>
<dbReference type="EMBL" id="M17810">
    <property type="protein sequence ID" value="AAA23594.1"/>
    <property type="molecule type" value="Genomic_DNA"/>
</dbReference>
<dbReference type="PIR" id="A30479">
    <property type="entry name" value="A30479"/>
</dbReference>
<dbReference type="PDB" id="2XGL">
    <property type="method" value="X-ray"/>
    <property type="resolution" value="2.70 A"/>
    <property type="chains" value="A/B=48-141"/>
</dbReference>
<dbReference type="PDB" id="4AEQ">
    <property type="method" value="X-ray"/>
    <property type="resolution" value="1.89 A"/>
    <property type="chains" value="A=44-141"/>
</dbReference>
<dbReference type="PDBsum" id="2XGL"/>
<dbReference type="PDBsum" id="4AEQ"/>
<dbReference type="SMR" id="P18002"/>
<dbReference type="TCDB" id="8.B.24.3.1">
    <property type="family name" value="the colicin immunity protein (colip) functional family"/>
</dbReference>
<dbReference type="EvolutionaryTrace" id="P18002"/>
<dbReference type="GO" id="GO:0030153">
    <property type="term" value="P:bacteriocin immunity"/>
    <property type="evidence" value="ECO:0007669"/>
    <property type="project" value="UniProtKB-KW"/>
</dbReference>
<dbReference type="Gene3D" id="3.10.450.300">
    <property type="entry name" value="YebF/Colicin-M immunity protein"/>
    <property type="match status" value="1"/>
</dbReference>
<dbReference type="InterPro" id="IPR038703">
    <property type="entry name" value="YebF/Cmi_sf"/>
</dbReference>
<dbReference type="InterPro" id="IPR025603">
    <property type="entry name" value="YebF/ColM_immunity"/>
</dbReference>
<dbReference type="Pfam" id="PF13995">
    <property type="entry name" value="YebF"/>
    <property type="match status" value="1"/>
</dbReference>
<dbReference type="PROSITE" id="PS51979">
    <property type="entry name" value="YEBF_CMI"/>
    <property type="match status" value="1"/>
</dbReference>
<reference key="1">
    <citation type="journal article" date="1988" name="Plasmid">
        <title>Plasmid pColBM-Cl139 does not encode a colicin lysis protein but contains sequences highly homologous to the D protein (resolvase) and the oriV region of the miniF plasmid.</title>
        <authorList>
            <person name="Thumm G."/>
            <person name="Oelschlaeger T."/>
            <person name="Braun V."/>
        </authorList>
    </citation>
    <scope>NUCLEOTIDE SEQUENCE [GENOMIC DNA] OF 1-53</scope>
</reference>
<reference key="2">
    <citation type="journal article" date="1987" name="J. Bacteriol.">
        <title>Sequence, expression, and localization of the immunity protein for colicin M.</title>
        <authorList>
            <person name="Oelschlaeger T."/>
            <person name="Braun V."/>
        </authorList>
    </citation>
    <scope>NUCLEOTIDE SEQUENCE [GENOMIC DNA] OF 25-141</scope>
</reference>
<comment type="function">
    <text>This protein is able to protect a cell, which harbors the plasmid ColBM-Cl139 encoding colicin M, against colicin M.</text>
</comment>
<evidence type="ECO:0000255" key="1">
    <source>
        <dbReference type="PROSITE-ProRule" id="PRU01323"/>
    </source>
</evidence>
<evidence type="ECO:0007829" key="2">
    <source>
        <dbReference type="PDB" id="4AEQ"/>
    </source>
</evidence>
<geneLocation type="plasmid">
    <name>ColBM-Cl139</name>
</geneLocation>
<organism>
    <name type="scientific">Escherichia coli</name>
    <dbReference type="NCBI Taxonomy" id="562"/>
    <lineage>
        <taxon>Bacteria</taxon>
        <taxon>Pseudomonadati</taxon>
        <taxon>Pseudomonadota</taxon>
        <taxon>Gammaproteobacteria</taxon>
        <taxon>Enterobacterales</taxon>
        <taxon>Enterobacteriaceae</taxon>
        <taxon>Escherichia</taxon>
    </lineage>
</organism>
<feature type="chain" id="PRO_0000218697" description="Colicin-M immunity protein">
    <location>
        <begin position="1"/>
        <end position="141"/>
    </location>
</feature>
<feature type="domain" description="YebF/Cmi" evidence="1">
    <location>
        <begin position="51"/>
        <end position="141"/>
    </location>
</feature>
<feature type="disulfide bond" evidence="1">
    <location>
        <begin position="55"/>
        <end position="131"/>
    </location>
</feature>
<feature type="helix" evidence="2">
    <location>
        <begin position="55"/>
        <end position="57"/>
    </location>
</feature>
<feature type="helix" evidence="2">
    <location>
        <begin position="60"/>
        <end position="85"/>
    </location>
</feature>
<feature type="strand" evidence="2">
    <location>
        <begin position="91"/>
        <end position="94"/>
    </location>
</feature>
<feature type="strand" evidence="2">
    <location>
        <begin position="101"/>
        <end position="103"/>
    </location>
</feature>
<feature type="helix" evidence="2">
    <location>
        <begin position="104"/>
        <end position="106"/>
    </location>
</feature>
<feature type="strand" evidence="2">
    <location>
        <begin position="109"/>
        <end position="117"/>
    </location>
</feature>
<feature type="strand" evidence="2">
    <location>
        <begin position="122"/>
        <end position="130"/>
    </location>
</feature>
<feature type="turn" evidence="2">
    <location>
        <begin position="131"/>
        <end position="134"/>
    </location>
</feature>
<feature type="strand" evidence="2">
    <location>
        <begin position="135"/>
        <end position="139"/>
    </location>
</feature>
<protein>
    <recommendedName>
        <fullName>Colicin-M immunity protein</fullName>
    </recommendedName>
    <alternativeName>
        <fullName>Microcin-M immunity protein</fullName>
    </alternativeName>
</protein>
<accession>P18002</accession>
<proteinExistence type="evidence at protein level"/>